<accession>Q8IZM9</accession>
<accession>C9JWA6</accession>
<accession>Q86SY5</accession>
<name>S38A6_HUMAN</name>
<comment type="function">
    <text evidence="1">Amino acid transporter with an apparent selectivity for L-glutamine and L-glutamate. May facilitate glutamine uptake in excitatory neurons. The transport mechanism remains to be elucidated.</text>
</comment>
<comment type="catalytic activity">
    <reaction evidence="1">
        <text>L-glutamine(out) = L-glutamine(in)</text>
        <dbReference type="Rhea" id="RHEA:73419"/>
        <dbReference type="ChEBI" id="CHEBI:58359"/>
    </reaction>
</comment>
<comment type="catalytic activity">
    <reaction evidence="1">
        <text>L-glutamate(out) = L-glutamate(in)</text>
        <dbReference type="Rhea" id="RHEA:66336"/>
        <dbReference type="ChEBI" id="CHEBI:29985"/>
    </reaction>
</comment>
<comment type="interaction">
    <interactant intactId="EBI-13377494">
        <id>Q8IZM9</id>
    </interactant>
    <interactant intactId="EBI-11988865">
        <id>A5PKU2</id>
        <label>TUSC5</label>
    </interactant>
    <organismsDiffer>false</organismsDiffer>
    <experiments>3</experiments>
</comment>
<comment type="subcellular location">
    <subcellularLocation>
        <location evidence="1">Cell membrane</location>
        <topology evidence="2">Multi-pass membrane protein</topology>
    </subcellularLocation>
    <subcellularLocation>
        <location evidence="1">Synapse</location>
    </subcellularLocation>
    <text evidence="1">Colocalizes with synaptotagmins and SNAP25.</text>
</comment>
<comment type="alternative products">
    <event type="alternative splicing"/>
    <isoform>
        <id>Q8IZM9-1</id>
        <name>1</name>
        <sequence type="displayed"/>
    </isoform>
    <isoform>
        <id>Q8IZM9-2</id>
        <name>2</name>
        <sequence type="described" ref="VSP_029563"/>
    </isoform>
</comment>
<comment type="similarity">
    <text evidence="8">Belongs to the amino acid/polyamine transporter 2 family.</text>
</comment>
<feature type="chain" id="PRO_0000311421" description="Solute carrier family 38 member 6">
    <location>
        <begin position="1"/>
        <end position="456"/>
    </location>
</feature>
<feature type="transmembrane region" description="Helical" evidence="2">
    <location>
        <begin position="42"/>
        <end position="62"/>
    </location>
</feature>
<feature type="transmembrane region" description="Helical" evidence="2">
    <location>
        <begin position="85"/>
        <end position="105"/>
    </location>
</feature>
<feature type="transmembrane region" description="Helical" evidence="2">
    <location>
        <begin position="111"/>
        <end position="131"/>
    </location>
</feature>
<feature type="transmembrane region" description="Helical" evidence="2">
    <location>
        <begin position="170"/>
        <end position="190"/>
    </location>
</feature>
<feature type="transmembrane region" description="Helical" evidence="2">
    <location>
        <begin position="191"/>
        <end position="211"/>
    </location>
</feature>
<feature type="transmembrane region" description="Helical" evidence="2">
    <location>
        <begin position="250"/>
        <end position="270"/>
    </location>
</feature>
<feature type="transmembrane region" description="Helical" evidence="2">
    <location>
        <begin position="288"/>
        <end position="308"/>
    </location>
</feature>
<feature type="transmembrane region" description="Helical" evidence="2">
    <location>
        <begin position="327"/>
        <end position="347"/>
    </location>
</feature>
<feature type="transmembrane region" description="Helical" evidence="2">
    <location>
        <begin position="371"/>
        <end position="391"/>
    </location>
</feature>
<feature type="transmembrane region" description="Helical" evidence="2">
    <location>
        <begin position="394"/>
        <end position="414"/>
    </location>
</feature>
<feature type="transmembrane region" description="Helical" evidence="2">
    <location>
        <begin position="431"/>
        <end position="451"/>
    </location>
</feature>
<feature type="modified residue" description="N-acetylmethionine" evidence="10">
    <location>
        <position position="1"/>
    </location>
</feature>
<feature type="modified residue" description="Phosphoserine" evidence="10">
    <location>
        <position position="4"/>
    </location>
</feature>
<feature type="modified residue" description="Phosphoserine" evidence="10 11">
    <location>
        <position position="7"/>
    </location>
</feature>
<feature type="glycosylation site" description="N-linked (GlcNAc...) asparagine" evidence="2">
    <location>
        <position position="233"/>
    </location>
</feature>
<feature type="glycosylation site" description="N-linked (GlcNAc...) asparagine" evidence="2">
    <location>
        <position position="283"/>
    </location>
</feature>
<feature type="disulfide bond" evidence="3">
    <location>
        <begin position="218"/>
        <end position="238"/>
    </location>
</feature>
<feature type="splice variant" id="VSP_029563" description="In isoform 2." evidence="7">
    <original>AFVLLIFGILVGNFSLALIIFDWINK</original>
    <variation>GLILSHRLACSGVISAHCNLCLPDSSNPPTSASRVAETTGRDTMEMCTQRKGHARTQQEGNCLQAKGRGLRRTKRVHTLILHFPTSRTVSK</variation>
    <location>
        <begin position="431"/>
        <end position="456"/>
    </location>
</feature>
<feature type="sequence variant" id="VAR_037247" description="In dbSNP:rs976272." evidence="4 6">
    <original>L</original>
    <variation>M</variation>
    <location>
        <position position="70"/>
    </location>
</feature>
<feature type="sequence variant" id="VAR_080631" description="In dbSNP:rs762713377." evidence="5">
    <original>S</original>
    <variation>T</variation>
    <location>
        <position position="419"/>
    </location>
</feature>
<keyword id="KW-0007">Acetylation</keyword>
<keyword id="KW-0025">Alternative splicing</keyword>
<keyword id="KW-0029">Amino-acid transport</keyword>
<keyword id="KW-1003">Cell membrane</keyword>
<keyword id="KW-1015">Disulfide bond</keyword>
<keyword id="KW-0325">Glycoprotein</keyword>
<keyword id="KW-0472">Membrane</keyword>
<keyword id="KW-0597">Phosphoprotein</keyword>
<keyword id="KW-1267">Proteomics identification</keyword>
<keyword id="KW-1185">Reference proteome</keyword>
<keyword id="KW-0770">Synapse</keyword>
<keyword id="KW-0812">Transmembrane</keyword>
<keyword id="KW-1133">Transmembrane helix</keyword>
<keyword id="KW-0813">Transport</keyword>
<protein>
    <recommendedName>
        <fullName>Solute carrier family 38 member 6</fullName>
    </recommendedName>
    <alternativeName>
        <fullName>Amino acid transporter SLC38A6</fullName>
    </alternativeName>
    <alternativeName>
        <fullName>N-system amino acid transporter 1</fullName>
        <shortName>NAT-1</shortName>
    </alternativeName>
</protein>
<proteinExistence type="evidence at protein level"/>
<evidence type="ECO:0000250" key="1">
    <source>
        <dbReference type="UniProtKB" id="G3UVW3"/>
    </source>
</evidence>
<evidence type="ECO:0000255" key="2"/>
<evidence type="ECO:0000255" key="3">
    <source>
        <dbReference type="PROSITE-ProRule" id="PRU00114"/>
    </source>
</evidence>
<evidence type="ECO:0000269" key="4">
    <source>
    </source>
</evidence>
<evidence type="ECO:0000269" key="5">
    <source>
    </source>
</evidence>
<evidence type="ECO:0000269" key="6">
    <source ref="1"/>
</evidence>
<evidence type="ECO:0000303" key="7">
    <source ref="4"/>
</evidence>
<evidence type="ECO:0000305" key="8"/>
<evidence type="ECO:0000312" key="9">
    <source>
        <dbReference type="HGNC" id="HGNC:19863"/>
    </source>
</evidence>
<evidence type="ECO:0007744" key="10">
    <source>
    </source>
</evidence>
<evidence type="ECO:0007744" key="11">
    <source>
    </source>
</evidence>
<sequence>MEASWGSFNAERGWYVSVQQPEEAEAEELSPLLSNELHRQRSPGVSFGLSVFNLMNAIMGSGILGLAYVLANTGVFGFSFLLLTVALLASYSVHLLLSMCIQTAVTSYEDLGLFAFGLPGKLVVAGTIIIQNIGAMSSYLLIIKTELPAAIAEFLTGDYSRYWYLDGQTLLIIICVGIVFPLALLPKIGFLGYTSSLSFFFMMFFALVVIIKKWSIPCPLTLNYVEKGFQISNVTDDCKPKLFHFSKESAYALPTMAFSFLCHTSILPIYCELQSPSKKRMQNVTNTAIALSFLIYFISALFGYLTFYDKVESELLKGYSKYLSHDVVVMTVKLCILFAVLLTVPLIHFPARKAVTMMFFSNFPFSWIRHFLITLALNIIIVLLAIYVPDIRNVFGVVGASTSTCLIFIFPGLFYLKLSREDFLSWKKLGAFVLLIFGILVGNFSLALIIFDWINK</sequence>
<gene>
    <name evidence="1 9" type="primary">SLC38A6</name>
    <name type="synonym">NAT1</name>
    <name evidence="1" type="synonym">SNAT6</name>
</gene>
<reference key="1">
    <citation type="submission" date="2002-09" db="EMBL/GenBank/DDBJ databases">
        <authorList>
            <person name="Guo J.H."/>
            <person name="Yu L."/>
        </authorList>
    </citation>
    <scope>NUCLEOTIDE SEQUENCE [LARGE SCALE MRNA] (ISOFORM 1)</scope>
    <scope>VARIANT MET-70</scope>
    <source>
        <tissue>Brain</tissue>
    </source>
</reference>
<reference key="2">
    <citation type="journal article" date="2003" name="Nature">
        <title>The DNA sequence and analysis of human chromosome 14.</title>
        <authorList>
            <person name="Heilig R."/>
            <person name="Eckenberg R."/>
            <person name="Petit J.-L."/>
            <person name="Fonknechten N."/>
            <person name="Da Silva C."/>
            <person name="Cattolico L."/>
            <person name="Levy M."/>
            <person name="Barbe V."/>
            <person name="De Berardinis V."/>
            <person name="Ureta-Vidal A."/>
            <person name="Pelletier E."/>
            <person name="Vico V."/>
            <person name="Anthouard V."/>
            <person name="Rowen L."/>
            <person name="Madan A."/>
            <person name="Qin S."/>
            <person name="Sun H."/>
            <person name="Du H."/>
            <person name="Pepin K."/>
            <person name="Artiguenave F."/>
            <person name="Robert C."/>
            <person name="Cruaud C."/>
            <person name="Bruels T."/>
            <person name="Jaillon O."/>
            <person name="Friedlander L."/>
            <person name="Samson G."/>
            <person name="Brottier P."/>
            <person name="Cure S."/>
            <person name="Segurens B."/>
            <person name="Aniere F."/>
            <person name="Samain S."/>
            <person name="Crespeau H."/>
            <person name="Abbasi N."/>
            <person name="Aiach N."/>
            <person name="Boscus D."/>
            <person name="Dickhoff R."/>
            <person name="Dors M."/>
            <person name="Dubois I."/>
            <person name="Friedman C."/>
            <person name="Gouyvenoux M."/>
            <person name="James R."/>
            <person name="Madan A."/>
            <person name="Mairey-Estrada B."/>
            <person name="Mangenot S."/>
            <person name="Martins N."/>
            <person name="Menard M."/>
            <person name="Oztas S."/>
            <person name="Ratcliffe A."/>
            <person name="Shaffer T."/>
            <person name="Trask B."/>
            <person name="Vacherie B."/>
            <person name="Bellemere C."/>
            <person name="Belser C."/>
            <person name="Besnard-Gonnet M."/>
            <person name="Bartol-Mavel D."/>
            <person name="Boutard M."/>
            <person name="Briez-Silla S."/>
            <person name="Combette S."/>
            <person name="Dufosse-Laurent V."/>
            <person name="Ferron C."/>
            <person name="Lechaplais C."/>
            <person name="Louesse C."/>
            <person name="Muselet D."/>
            <person name="Magdelenat G."/>
            <person name="Pateau E."/>
            <person name="Petit E."/>
            <person name="Sirvain-Trukniewicz P."/>
            <person name="Trybou A."/>
            <person name="Vega-Czarny N."/>
            <person name="Bataille E."/>
            <person name="Bluet E."/>
            <person name="Bordelais I."/>
            <person name="Dubois M."/>
            <person name="Dumont C."/>
            <person name="Guerin T."/>
            <person name="Haffray S."/>
            <person name="Hammadi R."/>
            <person name="Muanga J."/>
            <person name="Pellouin V."/>
            <person name="Robert D."/>
            <person name="Wunderle E."/>
            <person name="Gauguet G."/>
            <person name="Roy A."/>
            <person name="Sainte-Marthe L."/>
            <person name="Verdier J."/>
            <person name="Verdier-Discala C."/>
            <person name="Hillier L.W."/>
            <person name="Fulton L."/>
            <person name="McPherson J."/>
            <person name="Matsuda F."/>
            <person name="Wilson R."/>
            <person name="Scarpelli C."/>
            <person name="Gyapay G."/>
            <person name="Wincker P."/>
            <person name="Saurin W."/>
            <person name="Quetier F."/>
            <person name="Waterston R."/>
            <person name="Hood L."/>
            <person name="Weissenbach J."/>
        </authorList>
    </citation>
    <scope>NUCLEOTIDE SEQUENCE [LARGE SCALE GENOMIC DNA]</scope>
</reference>
<reference key="3">
    <citation type="journal article" date="2004" name="Genome Res.">
        <title>The status, quality, and expansion of the NIH full-length cDNA project: the Mammalian Gene Collection (MGC).</title>
        <authorList>
            <consortium name="The MGC Project Team"/>
        </authorList>
    </citation>
    <scope>NUCLEOTIDE SEQUENCE [LARGE SCALE MRNA] (ISOFORM 1)</scope>
    <scope>VARIANT MET-70</scope>
    <source>
        <tissue>Duodenum</tissue>
    </source>
</reference>
<reference key="4">
    <citation type="submission" date="2003-02" db="EMBL/GenBank/DDBJ databases">
        <title>Full-length cDNA libraries and normalization.</title>
        <authorList>
            <person name="Li W.B."/>
            <person name="Gruber C."/>
            <person name="Jessee J."/>
            <person name="Polayes D."/>
        </authorList>
    </citation>
    <scope>NUCLEOTIDE SEQUENCE [LARGE SCALE MRNA] OF 6-456 (ISOFORM 2)</scope>
    <source>
        <tissue>Cervix carcinoma</tissue>
    </source>
</reference>
<reference key="5">
    <citation type="journal article" date="2004" name="Pflugers Arch.">
        <title>Sodium-coupled neutral amino acid (System N/A) transporters of the SLC38 gene family.</title>
        <authorList>
            <person name="Mackenzie B."/>
            <person name="Erickson J.D."/>
        </authorList>
    </citation>
    <scope>REVIEW</scope>
    <scope>NOMENCLATURE</scope>
</reference>
<reference key="6">
    <citation type="journal article" date="2010" name="Sci. Signal.">
        <title>Quantitative phosphoproteomics reveals widespread full phosphorylation site occupancy during mitosis.</title>
        <authorList>
            <person name="Olsen J.V."/>
            <person name="Vermeulen M."/>
            <person name="Santamaria A."/>
            <person name="Kumar C."/>
            <person name="Miller M.L."/>
            <person name="Jensen L.J."/>
            <person name="Gnad F."/>
            <person name="Cox J."/>
            <person name="Jensen T.S."/>
            <person name="Nigg E.A."/>
            <person name="Brunak S."/>
            <person name="Mann M."/>
        </authorList>
    </citation>
    <scope>ACETYLATION [LARGE SCALE ANALYSIS] AT MET-1</scope>
    <scope>PHOSPHORYLATION [LARGE SCALE ANALYSIS] AT SER-4 AND SER-7</scope>
    <scope>IDENTIFICATION BY MASS SPECTROMETRY [LARGE SCALE ANALYSIS]</scope>
    <source>
        <tissue>Cervix carcinoma</tissue>
    </source>
</reference>
<reference key="7">
    <citation type="journal article" date="2013" name="J. Proteome Res.">
        <title>Toward a comprehensive characterization of a human cancer cell phosphoproteome.</title>
        <authorList>
            <person name="Zhou H."/>
            <person name="Di Palma S."/>
            <person name="Preisinger C."/>
            <person name="Peng M."/>
            <person name="Polat A.N."/>
            <person name="Heck A.J."/>
            <person name="Mohammed S."/>
        </authorList>
    </citation>
    <scope>PHOSPHORYLATION [LARGE SCALE ANALYSIS] AT SER-7</scope>
    <scope>IDENTIFICATION BY MASS SPECTROMETRY [LARGE SCALE ANALYSIS]</scope>
    <source>
        <tissue>Erythroleukemia</tissue>
    </source>
</reference>
<reference key="8">
    <citation type="journal article" date="2017" name="Hum. Mol. Genet.">
        <title>A mutation in IFT43 causes non-syndromic recessive retinal degeneration.</title>
        <authorList>
            <person name="Biswas P."/>
            <person name="Duncan J.L."/>
            <person name="Ali M."/>
            <person name="Matsui H."/>
            <person name="Naeem M.A."/>
            <person name="Raghavendra P.B."/>
            <person name="Frazer K.A."/>
            <person name="Arts H.H."/>
            <person name="Riazuddin S."/>
            <person name="Akram J."/>
            <person name="Hejtmancik J.F."/>
            <person name="Riazuddin S.A."/>
            <person name="Ayyagari R."/>
        </authorList>
    </citation>
    <scope>VARIANT THR-419</scope>
</reference>
<organism>
    <name type="scientific">Homo sapiens</name>
    <name type="common">Human</name>
    <dbReference type="NCBI Taxonomy" id="9606"/>
    <lineage>
        <taxon>Eukaryota</taxon>
        <taxon>Metazoa</taxon>
        <taxon>Chordata</taxon>
        <taxon>Craniata</taxon>
        <taxon>Vertebrata</taxon>
        <taxon>Euteleostomi</taxon>
        <taxon>Mammalia</taxon>
        <taxon>Eutheria</taxon>
        <taxon>Euarchontoglires</taxon>
        <taxon>Primates</taxon>
        <taxon>Haplorrhini</taxon>
        <taxon>Catarrhini</taxon>
        <taxon>Hominidae</taxon>
        <taxon>Homo</taxon>
    </lineage>
</organism>
<dbReference type="EMBL" id="AF543422">
    <property type="protein sequence ID" value="AAN47144.1"/>
    <property type="molecule type" value="mRNA"/>
</dbReference>
<dbReference type="EMBL" id="AL160236">
    <property type="status" value="NOT_ANNOTATED_CDS"/>
    <property type="molecule type" value="Genomic_DNA"/>
</dbReference>
<dbReference type="EMBL" id="AL160234">
    <property type="status" value="NOT_ANNOTATED_CDS"/>
    <property type="molecule type" value="Genomic_DNA"/>
</dbReference>
<dbReference type="EMBL" id="BC110378">
    <property type="protein sequence ID" value="AAI10379.1"/>
    <property type="molecule type" value="mRNA"/>
</dbReference>
<dbReference type="EMBL" id="BX248072">
    <property type="protein sequence ID" value="CAD62361.1"/>
    <property type="molecule type" value="mRNA"/>
</dbReference>
<dbReference type="CCDS" id="CCDS53900.1">
    <molecule id="Q8IZM9-2"/>
</dbReference>
<dbReference type="CCDS" id="CCDS9751.1">
    <molecule id="Q8IZM9-1"/>
</dbReference>
<dbReference type="RefSeq" id="NP_001166173.1">
    <molecule id="Q8IZM9-2"/>
    <property type="nucleotide sequence ID" value="NM_001172702.2"/>
</dbReference>
<dbReference type="RefSeq" id="NP_722518.2">
    <molecule id="Q8IZM9-1"/>
    <property type="nucleotide sequence ID" value="NM_153811.3"/>
</dbReference>
<dbReference type="SMR" id="Q8IZM9"/>
<dbReference type="BioGRID" id="126909">
    <property type="interactions" value="25"/>
</dbReference>
<dbReference type="FunCoup" id="Q8IZM9">
    <property type="interactions" value="353"/>
</dbReference>
<dbReference type="IntAct" id="Q8IZM9">
    <property type="interactions" value="5"/>
</dbReference>
<dbReference type="STRING" id="9606.ENSP00000346959"/>
<dbReference type="TCDB" id="2.A.18.6.11">
    <property type="family name" value="the amino acid/auxin permease (aaap) family"/>
</dbReference>
<dbReference type="GlyCosmos" id="Q8IZM9">
    <property type="glycosylation" value="2 sites, No reported glycans"/>
</dbReference>
<dbReference type="GlyGen" id="Q8IZM9">
    <property type="glycosylation" value="2 sites, 1 N-linked glycan (1 site)"/>
</dbReference>
<dbReference type="iPTMnet" id="Q8IZM9"/>
<dbReference type="PhosphoSitePlus" id="Q8IZM9"/>
<dbReference type="BioMuta" id="SLC38A6"/>
<dbReference type="DMDM" id="296452887"/>
<dbReference type="jPOST" id="Q8IZM9"/>
<dbReference type="MassIVE" id="Q8IZM9"/>
<dbReference type="PaxDb" id="9606-ENSP00000346959"/>
<dbReference type="PeptideAtlas" id="Q8IZM9"/>
<dbReference type="Antibodypedia" id="11535">
    <property type="antibodies" value="33 antibodies from 10 providers"/>
</dbReference>
<dbReference type="DNASU" id="145389"/>
<dbReference type="Ensembl" id="ENST00000267488.9">
    <molecule id="Q8IZM9-1"/>
    <property type="protein sequence ID" value="ENSP00000267488.4"/>
    <property type="gene ID" value="ENSG00000139974.17"/>
</dbReference>
<dbReference type="Ensembl" id="ENST00000354886.6">
    <molecule id="Q8IZM9-2"/>
    <property type="protein sequence ID" value="ENSP00000346959.2"/>
    <property type="gene ID" value="ENSG00000139974.17"/>
</dbReference>
<dbReference type="GeneID" id="145389"/>
<dbReference type="KEGG" id="hsa:145389"/>
<dbReference type="MANE-Select" id="ENST00000267488.9">
    <property type="protein sequence ID" value="ENSP00000267488.4"/>
    <property type="RefSeq nucleotide sequence ID" value="NM_153811.3"/>
    <property type="RefSeq protein sequence ID" value="NP_722518.2"/>
</dbReference>
<dbReference type="UCSC" id="uc001xfg.3">
    <molecule id="Q8IZM9-1"/>
    <property type="organism name" value="human"/>
</dbReference>
<dbReference type="AGR" id="HGNC:19863"/>
<dbReference type="CTD" id="145389"/>
<dbReference type="DisGeNET" id="145389"/>
<dbReference type="GeneCards" id="SLC38A6"/>
<dbReference type="HGNC" id="HGNC:19863">
    <property type="gene designation" value="SLC38A6"/>
</dbReference>
<dbReference type="HPA" id="ENSG00000139974">
    <property type="expression patterns" value="Low tissue specificity"/>
</dbReference>
<dbReference type="MIM" id="616518">
    <property type="type" value="gene"/>
</dbReference>
<dbReference type="neXtProt" id="NX_Q8IZM9"/>
<dbReference type="OpenTargets" id="ENSG00000139974"/>
<dbReference type="PharmGKB" id="PA134932150"/>
<dbReference type="VEuPathDB" id="HostDB:ENSG00000139974"/>
<dbReference type="eggNOG" id="KOG1305">
    <property type="taxonomic scope" value="Eukaryota"/>
</dbReference>
<dbReference type="GeneTree" id="ENSGT00940000156982"/>
<dbReference type="HOGENOM" id="CLU_009020_0_0_1"/>
<dbReference type="InParanoid" id="Q8IZM9"/>
<dbReference type="OMA" id="KARMQNV"/>
<dbReference type="OrthoDB" id="28208at2759"/>
<dbReference type="PAN-GO" id="Q8IZM9">
    <property type="GO annotations" value="4 GO annotations based on evolutionary models"/>
</dbReference>
<dbReference type="PhylomeDB" id="Q8IZM9"/>
<dbReference type="TreeFam" id="TF328787"/>
<dbReference type="PathwayCommons" id="Q8IZM9"/>
<dbReference type="SignaLink" id="Q8IZM9"/>
<dbReference type="BioGRID-ORCS" id="145389">
    <property type="hits" value="11 hits in 1145 CRISPR screens"/>
</dbReference>
<dbReference type="ChiTaRS" id="SLC38A6">
    <property type="organism name" value="human"/>
</dbReference>
<dbReference type="GenomeRNAi" id="145389"/>
<dbReference type="Pharos" id="Q8IZM9">
    <property type="development level" value="Tdark"/>
</dbReference>
<dbReference type="PRO" id="PR:Q8IZM9"/>
<dbReference type="Proteomes" id="UP000005640">
    <property type="component" value="Chromosome 14"/>
</dbReference>
<dbReference type="RNAct" id="Q8IZM9">
    <property type="molecule type" value="protein"/>
</dbReference>
<dbReference type="Bgee" id="ENSG00000139974">
    <property type="expression patterns" value="Expressed in calcaneal tendon and 161 other cell types or tissues"/>
</dbReference>
<dbReference type="ExpressionAtlas" id="Q8IZM9">
    <property type="expression patterns" value="baseline and differential"/>
</dbReference>
<dbReference type="GO" id="GO:0005886">
    <property type="term" value="C:plasma membrane"/>
    <property type="evidence" value="ECO:0000250"/>
    <property type="project" value="UniProtKB"/>
</dbReference>
<dbReference type="GO" id="GO:0045202">
    <property type="term" value="C:synapse"/>
    <property type="evidence" value="ECO:0007669"/>
    <property type="project" value="UniProtKB-SubCell"/>
</dbReference>
<dbReference type="GO" id="GO:0005313">
    <property type="term" value="F:L-glutamate transmembrane transporter activity"/>
    <property type="evidence" value="ECO:0000250"/>
    <property type="project" value="UniProtKB"/>
</dbReference>
<dbReference type="GO" id="GO:0015186">
    <property type="term" value="F:L-glutamine transmembrane transporter activity"/>
    <property type="evidence" value="ECO:0000250"/>
    <property type="project" value="UniProtKB"/>
</dbReference>
<dbReference type="GO" id="GO:0003333">
    <property type="term" value="P:amino acid transmembrane transport"/>
    <property type="evidence" value="ECO:0000318"/>
    <property type="project" value="GO_Central"/>
</dbReference>
<dbReference type="GO" id="GO:0006868">
    <property type="term" value="P:glutamine transport"/>
    <property type="evidence" value="ECO:0000318"/>
    <property type="project" value="GO_Central"/>
</dbReference>
<dbReference type="InterPro" id="IPR013057">
    <property type="entry name" value="AA_transpt_TM"/>
</dbReference>
<dbReference type="PANTHER" id="PTHR22950">
    <property type="entry name" value="AMINO ACID TRANSPORTER"/>
    <property type="match status" value="1"/>
</dbReference>
<dbReference type="PANTHER" id="PTHR22950:SF366">
    <property type="entry name" value="SODIUM-COUPLED NEUTRAL AMINO ACID TRANSPORTER 6-RELATED"/>
    <property type="match status" value="1"/>
</dbReference>
<dbReference type="Pfam" id="PF01490">
    <property type="entry name" value="Aa_trans"/>
    <property type="match status" value="1"/>
</dbReference>